<accession>A8W3E9</accession>
<proteinExistence type="inferred from homology"/>
<protein>
    <recommendedName>
        <fullName evidence="1">Protein PsbN</fullName>
    </recommendedName>
</protein>
<evidence type="ECO:0000255" key="1">
    <source>
        <dbReference type="HAMAP-Rule" id="MF_00293"/>
    </source>
</evidence>
<evidence type="ECO:0000305" key="2"/>
<name>PSBN_CUSEX</name>
<dbReference type="EMBL" id="EU189132">
    <property type="protein sequence ID" value="ABW83720.1"/>
    <property type="molecule type" value="Genomic_DNA"/>
</dbReference>
<dbReference type="RefSeq" id="YP_001542556.1">
    <property type="nucleotide sequence ID" value="NC_009963.1"/>
</dbReference>
<dbReference type="GeneID" id="5729647"/>
<dbReference type="GO" id="GO:0042170">
    <property type="term" value="C:plastid membrane"/>
    <property type="evidence" value="ECO:0007669"/>
    <property type="project" value="UniProtKB-SubCell"/>
</dbReference>
<dbReference type="GO" id="GO:0042651">
    <property type="term" value="C:thylakoid membrane"/>
    <property type="evidence" value="ECO:0007669"/>
    <property type="project" value="UniProtKB-UniRule"/>
</dbReference>
<dbReference type="GO" id="GO:0015979">
    <property type="term" value="P:photosynthesis"/>
    <property type="evidence" value="ECO:0007669"/>
    <property type="project" value="InterPro"/>
</dbReference>
<dbReference type="HAMAP" id="MF_00293">
    <property type="entry name" value="PSII_PsbN"/>
    <property type="match status" value="1"/>
</dbReference>
<dbReference type="InterPro" id="IPR003398">
    <property type="entry name" value="PSII_PsbN"/>
</dbReference>
<dbReference type="PANTHER" id="PTHR35326">
    <property type="entry name" value="PROTEIN PSBN"/>
    <property type="match status" value="1"/>
</dbReference>
<dbReference type="PANTHER" id="PTHR35326:SF3">
    <property type="entry name" value="PROTEIN PSBN"/>
    <property type="match status" value="1"/>
</dbReference>
<dbReference type="Pfam" id="PF02468">
    <property type="entry name" value="PsbN"/>
    <property type="match status" value="1"/>
</dbReference>
<geneLocation type="plastid"/>
<feature type="chain" id="PRO_0000362186" description="Protein PsbN">
    <location>
        <begin position="1"/>
        <end position="43"/>
    </location>
</feature>
<feature type="transmembrane region" description="Helical" evidence="1">
    <location>
        <begin position="7"/>
        <end position="29"/>
    </location>
</feature>
<keyword id="KW-0472">Membrane</keyword>
<keyword id="KW-0934">Plastid</keyword>
<keyword id="KW-0812">Transmembrane</keyword>
<keyword id="KW-1133">Transmembrane helix</keyword>
<comment type="function">
    <text evidence="1">May play a role in photosystem I and II biogenesis.</text>
</comment>
<comment type="subcellular location">
    <subcellularLocation>
        <location evidence="2">Plastid membrane</location>
        <topology evidence="1">Single-pass membrane protein</topology>
    </subcellularLocation>
</comment>
<comment type="similarity">
    <text evidence="1">Belongs to the PsbN family.</text>
</comment>
<comment type="caution">
    <text evidence="2">Young tissue from this organism is photosynthetic and contains some thylakoids, although the photosynthetic activity does not exceed the light compensation point.</text>
</comment>
<comment type="caution">
    <text evidence="1">Originally thought to be a component of PSII; based on experiments in Synechocystis, N.tabacum and barley, and its absence from PSII in T.elongatus and T.vulcanus, this is probably not true.</text>
</comment>
<reference key="1">
    <citation type="journal article" date="2007" name="BMC Plant Biol.">
        <title>Complete plastid genome sequences suggest strong selection for retention of photosynthetic genes in the parasitic plant genus Cuscuta.</title>
        <authorList>
            <person name="McNeal J.R."/>
            <person name="Kuehl J.V."/>
            <person name="Boore J.L."/>
            <person name="dePamphilis C.W."/>
        </authorList>
    </citation>
    <scope>NUCLEOTIDE SEQUENCE [LARGE SCALE GENOMIC DNA]</scope>
</reference>
<sequence length="43" mass="4766">METATLITIFLSGLLVSFTGYALYTAFGQPSQQLRDPFEEHGD</sequence>
<organism>
    <name type="scientific">Cuscuta exaltata</name>
    <name type="common">Tall dodder</name>
    <dbReference type="NCBI Taxonomy" id="476139"/>
    <lineage>
        <taxon>Eukaryota</taxon>
        <taxon>Viridiplantae</taxon>
        <taxon>Streptophyta</taxon>
        <taxon>Embryophyta</taxon>
        <taxon>Tracheophyta</taxon>
        <taxon>Spermatophyta</taxon>
        <taxon>Magnoliopsida</taxon>
        <taxon>eudicotyledons</taxon>
        <taxon>Gunneridae</taxon>
        <taxon>Pentapetalae</taxon>
        <taxon>asterids</taxon>
        <taxon>lamiids</taxon>
        <taxon>Solanales</taxon>
        <taxon>Convolvulaceae</taxon>
        <taxon>Cuscuteae</taxon>
        <taxon>Cuscuta</taxon>
        <taxon>Cuscuta subgen. Monogynella</taxon>
    </lineage>
</organism>
<gene>
    <name evidence="1" type="primary">psbN</name>
</gene>